<protein>
    <recommendedName>
        <fullName evidence="2">U-scoloptoxin(16)-Er8a</fullName>
        <shortName evidence="2">U-SLPTX(16)-Er8a</shortName>
    </recommendedName>
</protein>
<feature type="signal peptide" evidence="1">
    <location>
        <begin position="1"/>
        <end position="26"/>
    </location>
</feature>
<feature type="chain" id="PRO_0000446815" description="U-scoloptoxin(16)-Er8a" evidence="3">
    <location>
        <begin position="27"/>
        <end position="111"/>
    </location>
</feature>
<dbReference type="SMR" id="P0DQG2"/>
<dbReference type="GO" id="GO:0005576">
    <property type="term" value="C:extracellular region"/>
    <property type="evidence" value="ECO:0007669"/>
    <property type="project" value="UniProtKB-SubCell"/>
</dbReference>
<dbReference type="GO" id="GO:0090729">
    <property type="term" value="F:toxin activity"/>
    <property type="evidence" value="ECO:0007669"/>
    <property type="project" value="UniProtKB-KW"/>
</dbReference>
<dbReference type="InterPro" id="IPR029277">
    <property type="entry name" value="SVWC_dom"/>
</dbReference>
<dbReference type="Pfam" id="PF15430">
    <property type="entry name" value="SVWC"/>
    <property type="match status" value="1"/>
</dbReference>
<dbReference type="SMART" id="SM01318">
    <property type="entry name" value="SVWC"/>
    <property type="match status" value="1"/>
</dbReference>
<organism>
    <name type="scientific">Ethmostigmus rubripes</name>
    <name type="common">Giant centipede</name>
    <dbReference type="NCBI Taxonomy" id="62613"/>
    <lineage>
        <taxon>Eukaryota</taxon>
        <taxon>Metazoa</taxon>
        <taxon>Ecdysozoa</taxon>
        <taxon>Arthropoda</taxon>
        <taxon>Myriapoda</taxon>
        <taxon>Chilopoda</taxon>
        <taxon>Pleurostigmophora</taxon>
        <taxon>Scolopendromorpha</taxon>
        <taxon>Scolopendridae</taxon>
        <taxon>Ethmostigmus</taxon>
    </lineage>
</organism>
<name>TXG8A_ETHRU</name>
<comment type="subcellular location">
    <subcellularLocation>
        <location evidence="4">Secreted</location>
    </subcellularLocation>
</comment>
<comment type="tissue specificity">
    <text evidence="4">Expressed by the venom gland.</text>
</comment>
<comment type="PTM">
    <text evidence="3">Contains 4 disulfide bonds.</text>
</comment>
<comment type="similarity">
    <text evidence="3">Belongs to the scoloptoxin-16 family.</text>
</comment>
<comment type="caution">
    <text evidence="4">All E.rubripes family members described in 'Undeheim et al., 2014' have not been imported into UniProtKB. Please, refer to this paper to access them.</text>
</comment>
<comment type="online information" name="National Center for Biotechnology Information (NCBI)">
    <link uri="https://www.ncbi.nlm.nih.gov/nuccore/GASI01000154"/>
</comment>
<evidence type="ECO:0000255" key="1"/>
<evidence type="ECO:0000303" key="2">
    <source>
    </source>
</evidence>
<evidence type="ECO:0000305" key="3"/>
<evidence type="ECO:0000305" key="4">
    <source>
    </source>
</evidence>
<proteinExistence type="inferred from homology"/>
<keyword id="KW-1015">Disulfide bond</keyword>
<keyword id="KW-0964">Secreted</keyword>
<keyword id="KW-0732">Signal</keyword>
<keyword id="KW-0800">Toxin</keyword>
<sequence>MTSTRKLSVSCLIVFMVSSLIAVSSGWLSSTGKSPLKIGKCDPKNGNLYAIGRKWYNDEDCFEITCIQGDKGSVAQQVASCPVHAVKPGCELVFPGGTYPKCCPYYECPNS</sequence>
<reference key="1">
    <citation type="journal article" date="2014" name="Mol. Biol. Evol.">
        <title>Clawing through evolution: toxin diversification and convergence in the ancient lineage Chilopoda (centipedes).</title>
        <authorList>
            <person name="Undheim E.A."/>
            <person name="Jones A."/>
            <person name="Clauser K.R."/>
            <person name="Holland J.W."/>
            <person name="Pineda S.S."/>
            <person name="King G.F."/>
            <person name="Fry B.G."/>
        </authorList>
    </citation>
    <scope>NUCLEOTIDE SEQUENCE [MRNA]</scope>
    <scope>NOMENCLATURE</scope>
    <source>
        <tissue>Venom gland</tissue>
    </source>
</reference>
<accession>P0DQG2</accession>